<evidence type="ECO:0000255" key="1">
    <source>
        <dbReference type="HAMAP-Rule" id="MF_00185"/>
    </source>
</evidence>
<organism>
    <name type="scientific">Methylorubrum extorquens (strain CM4 / NCIMB 13688)</name>
    <name type="common">Methylobacterium extorquens</name>
    <dbReference type="NCBI Taxonomy" id="440085"/>
    <lineage>
        <taxon>Bacteria</taxon>
        <taxon>Pseudomonadati</taxon>
        <taxon>Pseudomonadota</taxon>
        <taxon>Alphaproteobacteria</taxon>
        <taxon>Hyphomicrobiales</taxon>
        <taxon>Methylobacteriaceae</taxon>
        <taxon>Methylorubrum</taxon>
    </lineage>
</organism>
<gene>
    <name evidence="1" type="primary">miaA</name>
    <name type="ordered locus">Mchl_2881</name>
</gene>
<proteinExistence type="inferred from homology"/>
<comment type="function">
    <text evidence="1">Catalyzes the transfer of a dimethylallyl group onto the adenine at position 37 in tRNAs that read codons beginning with uridine, leading to the formation of N6-(dimethylallyl)adenosine (i(6)A).</text>
</comment>
<comment type="catalytic activity">
    <reaction evidence="1">
        <text>adenosine(37) in tRNA + dimethylallyl diphosphate = N(6)-dimethylallyladenosine(37) in tRNA + diphosphate</text>
        <dbReference type="Rhea" id="RHEA:26482"/>
        <dbReference type="Rhea" id="RHEA-COMP:10162"/>
        <dbReference type="Rhea" id="RHEA-COMP:10375"/>
        <dbReference type="ChEBI" id="CHEBI:33019"/>
        <dbReference type="ChEBI" id="CHEBI:57623"/>
        <dbReference type="ChEBI" id="CHEBI:74411"/>
        <dbReference type="ChEBI" id="CHEBI:74415"/>
        <dbReference type="EC" id="2.5.1.75"/>
    </reaction>
</comment>
<comment type="cofactor">
    <cofactor evidence="1">
        <name>Mg(2+)</name>
        <dbReference type="ChEBI" id="CHEBI:18420"/>
    </cofactor>
</comment>
<comment type="subunit">
    <text evidence="1">Monomer.</text>
</comment>
<comment type="similarity">
    <text evidence="1">Belongs to the IPP transferase family.</text>
</comment>
<sequence length="317" mass="34626">MQSPDGQETGRPAAILIAGPTASGKSALGLRIARAFGGTVINTDSMQVYADLRVLSARPTAEEEGLAPHRLYGSIDGAVNFSVGHFQRQAAALLSEMDAGTLPVFVGGTGLYFRSLDEGISDLPEVPDAIRQRIRAEADGQPTETLHAALALRDPESAQGLRPSDRMRVMRALEIHAATGRSIGSFHDARVPGPLAGKPLLKLFLTTEREALRQRIDARFVTMMEQGALDEVAALRERRLDPLLPVMRAHGVPGLTAYLDGTISREEAIQRGQGDTRRYAKRQFTWFRHQMGEDWRWTTPEAAWSQVEARLSAPAGR</sequence>
<keyword id="KW-0067">ATP-binding</keyword>
<keyword id="KW-0460">Magnesium</keyword>
<keyword id="KW-0547">Nucleotide-binding</keyword>
<keyword id="KW-0808">Transferase</keyword>
<keyword id="KW-0819">tRNA processing</keyword>
<protein>
    <recommendedName>
        <fullName evidence="1">tRNA dimethylallyltransferase</fullName>
        <ecNumber evidence="1">2.5.1.75</ecNumber>
    </recommendedName>
    <alternativeName>
        <fullName evidence="1">Dimethylallyl diphosphate:tRNA dimethylallyltransferase</fullName>
        <shortName evidence="1">DMAPP:tRNA dimethylallyltransferase</shortName>
        <shortName evidence="1">DMATase</shortName>
    </alternativeName>
    <alternativeName>
        <fullName evidence="1">Isopentenyl-diphosphate:tRNA isopentenyltransferase</fullName>
        <shortName evidence="1">IPP transferase</shortName>
        <shortName evidence="1">IPPT</shortName>
        <shortName evidence="1">IPTase</shortName>
    </alternativeName>
</protein>
<dbReference type="EC" id="2.5.1.75" evidence="1"/>
<dbReference type="EMBL" id="CP001298">
    <property type="protein sequence ID" value="ACK83720.1"/>
    <property type="molecule type" value="Genomic_DNA"/>
</dbReference>
<dbReference type="RefSeq" id="WP_015951153.1">
    <property type="nucleotide sequence ID" value="NC_011757.1"/>
</dbReference>
<dbReference type="SMR" id="B7KQF6"/>
<dbReference type="KEGG" id="mch:Mchl_2881"/>
<dbReference type="HOGENOM" id="CLU_032616_0_1_5"/>
<dbReference type="Proteomes" id="UP000002385">
    <property type="component" value="Chromosome"/>
</dbReference>
<dbReference type="GO" id="GO:0005524">
    <property type="term" value="F:ATP binding"/>
    <property type="evidence" value="ECO:0007669"/>
    <property type="project" value="UniProtKB-UniRule"/>
</dbReference>
<dbReference type="GO" id="GO:0052381">
    <property type="term" value="F:tRNA dimethylallyltransferase activity"/>
    <property type="evidence" value="ECO:0007669"/>
    <property type="project" value="UniProtKB-UniRule"/>
</dbReference>
<dbReference type="GO" id="GO:0006400">
    <property type="term" value="P:tRNA modification"/>
    <property type="evidence" value="ECO:0007669"/>
    <property type="project" value="TreeGrafter"/>
</dbReference>
<dbReference type="Gene3D" id="1.10.20.140">
    <property type="match status" value="1"/>
</dbReference>
<dbReference type="Gene3D" id="3.40.50.300">
    <property type="entry name" value="P-loop containing nucleotide triphosphate hydrolases"/>
    <property type="match status" value="1"/>
</dbReference>
<dbReference type="HAMAP" id="MF_00185">
    <property type="entry name" value="IPP_trans"/>
    <property type="match status" value="1"/>
</dbReference>
<dbReference type="InterPro" id="IPR039657">
    <property type="entry name" value="Dimethylallyltransferase"/>
</dbReference>
<dbReference type="InterPro" id="IPR018022">
    <property type="entry name" value="IPT"/>
</dbReference>
<dbReference type="InterPro" id="IPR027417">
    <property type="entry name" value="P-loop_NTPase"/>
</dbReference>
<dbReference type="NCBIfam" id="TIGR00174">
    <property type="entry name" value="miaA"/>
    <property type="match status" value="1"/>
</dbReference>
<dbReference type="PANTHER" id="PTHR11088">
    <property type="entry name" value="TRNA DIMETHYLALLYLTRANSFERASE"/>
    <property type="match status" value="1"/>
</dbReference>
<dbReference type="PANTHER" id="PTHR11088:SF60">
    <property type="entry name" value="TRNA DIMETHYLALLYLTRANSFERASE"/>
    <property type="match status" value="1"/>
</dbReference>
<dbReference type="Pfam" id="PF01715">
    <property type="entry name" value="IPPT"/>
    <property type="match status" value="1"/>
</dbReference>
<dbReference type="SUPFAM" id="SSF52540">
    <property type="entry name" value="P-loop containing nucleoside triphosphate hydrolases"/>
    <property type="match status" value="2"/>
</dbReference>
<reference key="1">
    <citation type="submission" date="2008-12" db="EMBL/GenBank/DDBJ databases">
        <title>Complete sequence of chromosome of Methylobacterium chloromethanicum CM4.</title>
        <authorList>
            <consortium name="US DOE Joint Genome Institute"/>
            <person name="Lucas S."/>
            <person name="Copeland A."/>
            <person name="Lapidus A."/>
            <person name="Glavina del Rio T."/>
            <person name="Dalin E."/>
            <person name="Tice H."/>
            <person name="Bruce D."/>
            <person name="Goodwin L."/>
            <person name="Pitluck S."/>
            <person name="Chertkov O."/>
            <person name="Brettin T."/>
            <person name="Detter J.C."/>
            <person name="Han C."/>
            <person name="Larimer F."/>
            <person name="Land M."/>
            <person name="Hauser L."/>
            <person name="Kyrpides N."/>
            <person name="Mikhailova N."/>
            <person name="Marx C."/>
            <person name="Richardson P."/>
        </authorList>
    </citation>
    <scope>NUCLEOTIDE SEQUENCE [LARGE SCALE GENOMIC DNA]</scope>
    <source>
        <strain>CM4 / NCIMB 13688</strain>
    </source>
</reference>
<feature type="chain" id="PRO_1000191856" description="tRNA dimethylallyltransferase">
    <location>
        <begin position="1"/>
        <end position="317"/>
    </location>
</feature>
<feature type="region of interest" description="Interaction with substrate tRNA" evidence="1">
    <location>
        <begin position="44"/>
        <end position="47"/>
    </location>
</feature>
<feature type="binding site" evidence="1">
    <location>
        <begin position="19"/>
        <end position="26"/>
    </location>
    <ligand>
        <name>ATP</name>
        <dbReference type="ChEBI" id="CHEBI:30616"/>
    </ligand>
</feature>
<feature type="binding site" evidence="1">
    <location>
        <begin position="21"/>
        <end position="26"/>
    </location>
    <ligand>
        <name>substrate</name>
    </ligand>
</feature>
<feature type="site" description="Interaction with substrate tRNA" evidence="1">
    <location>
        <position position="109"/>
    </location>
</feature>
<feature type="site" description="Interaction with substrate tRNA" evidence="1">
    <location>
        <position position="131"/>
    </location>
</feature>
<accession>B7KQF6</accession>
<name>MIAA_METC4</name>